<dbReference type="EMBL" id="M30641">
    <property type="protein sequence ID" value="AAA37618.1"/>
    <property type="molecule type" value="mRNA"/>
</dbReference>
<dbReference type="EMBL" id="U36459">
    <property type="protein sequence ID" value="AAC52969.1"/>
    <property type="molecule type" value="Genomic_DNA"/>
</dbReference>
<dbReference type="EMBL" id="U36457">
    <property type="protein sequence ID" value="AAC52969.1"/>
    <property type="status" value="JOINED"/>
    <property type="molecule type" value="Genomic_DNA"/>
</dbReference>
<dbReference type="EMBL" id="U36458">
    <property type="protein sequence ID" value="AAC52969.1"/>
    <property type="status" value="JOINED"/>
    <property type="molecule type" value="Genomic_DNA"/>
</dbReference>
<dbReference type="EMBL" id="U67610">
    <property type="protein sequence ID" value="AAC52907.1"/>
    <property type="molecule type" value="mRNA"/>
</dbReference>
<dbReference type="EMBL" id="BC037601">
    <property type="protein sequence ID" value="AAH37601.1"/>
    <property type="molecule type" value="mRNA"/>
</dbReference>
<dbReference type="CCDS" id="CCDS29204.1"/>
<dbReference type="PIR" id="D37360">
    <property type="entry name" value="D37360"/>
</dbReference>
<dbReference type="RefSeq" id="NP_034327.1">
    <property type="nucleotide sequence ID" value="NM_010197.3"/>
</dbReference>
<dbReference type="RefSeq" id="XP_006525707.1">
    <property type="nucleotide sequence ID" value="XM_006525644.4"/>
</dbReference>
<dbReference type="RefSeq" id="XP_006525708.1">
    <property type="nucleotide sequence ID" value="XM_006525645.5"/>
</dbReference>
<dbReference type="RefSeq" id="XP_006525710.1">
    <property type="nucleotide sequence ID" value="XM_006525647.4"/>
</dbReference>
<dbReference type="RefSeq" id="XP_006525711.1">
    <property type="nucleotide sequence ID" value="XM_006525648.5"/>
</dbReference>
<dbReference type="RefSeq" id="XP_006525712.1">
    <property type="nucleotide sequence ID" value="XM_006525649.3"/>
</dbReference>
<dbReference type="RefSeq" id="XP_011245144.1">
    <property type="nucleotide sequence ID" value="XM_011246842.3"/>
</dbReference>
<dbReference type="RefSeq" id="XP_011245145.1">
    <property type="nucleotide sequence ID" value="XM_011246843.3"/>
</dbReference>
<dbReference type="RefSeq" id="XP_017173319.1">
    <property type="nucleotide sequence ID" value="XM_017317830.1"/>
</dbReference>
<dbReference type="RefSeq" id="XP_036016878.1">
    <property type="nucleotide sequence ID" value="XM_036160985.1"/>
</dbReference>
<dbReference type="RefSeq" id="XP_036016879.1">
    <property type="nucleotide sequence ID" value="XM_036160986.1"/>
</dbReference>
<dbReference type="RefSeq" id="XP_036016880.1">
    <property type="nucleotide sequence ID" value="XM_036160987.1"/>
</dbReference>
<dbReference type="BMRB" id="P61148"/>
<dbReference type="SMR" id="P61148"/>
<dbReference type="BioGRID" id="199638">
    <property type="interactions" value="5"/>
</dbReference>
<dbReference type="FunCoup" id="P61148">
    <property type="interactions" value="1602"/>
</dbReference>
<dbReference type="IntAct" id="P61148">
    <property type="interactions" value="1"/>
</dbReference>
<dbReference type="STRING" id="10090.ENSMUSP00000045710"/>
<dbReference type="TCDB" id="9.A.48.1.1">
    <property type="family name" value="the unconventional protein secretion (ups) system family"/>
</dbReference>
<dbReference type="iPTMnet" id="P61148"/>
<dbReference type="PhosphoSitePlus" id="P61148"/>
<dbReference type="SwissPalm" id="P61148"/>
<dbReference type="jPOST" id="P61148"/>
<dbReference type="PaxDb" id="10090-ENSMUSP00000045710"/>
<dbReference type="PeptideAtlas" id="P61148"/>
<dbReference type="ProteomicsDB" id="267466"/>
<dbReference type="Antibodypedia" id="1009">
    <property type="antibodies" value="765 antibodies from 44 providers"/>
</dbReference>
<dbReference type="DNASU" id="14164"/>
<dbReference type="Ensembl" id="ENSMUST00000040647.11">
    <property type="protein sequence ID" value="ENSMUSP00000045710.5"/>
    <property type="gene ID" value="ENSMUSG00000036585.17"/>
</dbReference>
<dbReference type="Ensembl" id="ENSMUST00000115582.8">
    <property type="protein sequence ID" value="ENSMUSP00000111245.2"/>
    <property type="gene ID" value="ENSMUSG00000036585.17"/>
</dbReference>
<dbReference type="Ensembl" id="ENSMUST00000236630.2">
    <property type="protein sequence ID" value="ENSMUSP00000157968.2"/>
    <property type="gene ID" value="ENSMUSG00000036585.17"/>
</dbReference>
<dbReference type="GeneID" id="14164"/>
<dbReference type="KEGG" id="mmu:14164"/>
<dbReference type="UCSC" id="uc008esn.1">
    <property type="organism name" value="mouse"/>
</dbReference>
<dbReference type="AGR" id="MGI:95515"/>
<dbReference type="CTD" id="2246"/>
<dbReference type="MGI" id="MGI:95515">
    <property type="gene designation" value="Fgf1"/>
</dbReference>
<dbReference type="VEuPathDB" id="HostDB:ENSMUSG00000036585"/>
<dbReference type="eggNOG" id="KOG3885">
    <property type="taxonomic scope" value="Eukaryota"/>
</dbReference>
<dbReference type="GeneTree" id="ENSGT00940000160557"/>
<dbReference type="HOGENOM" id="CLU_081609_5_1_1"/>
<dbReference type="InParanoid" id="P61148"/>
<dbReference type="OMA" id="KSWFVGL"/>
<dbReference type="OrthoDB" id="5987799at2759"/>
<dbReference type="PhylomeDB" id="P61148"/>
<dbReference type="TreeFam" id="TF317805"/>
<dbReference type="Reactome" id="R-MMU-109704">
    <property type="pathway name" value="PI3K Cascade"/>
</dbReference>
<dbReference type="Reactome" id="R-MMU-1257604">
    <property type="pathway name" value="PIP3 activates AKT signaling"/>
</dbReference>
<dbReference type="Reactome" id="R-MMU-190322">
    <property type="pathway name" value="FGFR4 ligand binding and activation"/>
</dbReference>
<dbReference type="Reactome" id="R-MMU-190370">
    <property type="pathway name" value="FGFR1b ligand binding and activation"/>
</dbReference>
<dbReference type="Reactome" id="R-MMU-190371">
    <property type="pathway name" value="FGFR3b ligand binding and activation"/>
</dbReference>
<dbReference type="Reactome" id="R-MMU-190372">
    <property type="pathway name" value="FGFR3c ligand binding and activation"/>
</dbReference>
<dbReference type="Reactome" id="R-MMU-190373">
    <property type="pathway name" value="FGFR1c ligand binding and activation"/>
</dbReference>
<dbReference type="Reactome" id="R-MMU-190375">
    <property type="pathway name" value="FGFR2c ligand binding and activation"/>
</dbReference>
<dbReference type="Reactome" id="R-MMU-190377">
    <property type="pathway name" value="FGFR2b ligand binding and activation"/>
</dbReference>
<dbReference type="Reactome" id="R-MMU-5654219">
    <property type="pathway name" value="Phospholipase C-mediated cascade: FGFR1"/>
</dbReference>
<dbReference type="Reactome" id="R-MMU-5654221">
    <property type="pathway name" value="Phospholipase C-mediated cascade, FGFR2"/>
</dbReference>
<dbReference type="Reactome" id="R-MMU-5654227">
    <property type="pathway name" value="Phospholipase C-mediated cascade, FGFR3"/>
</dbReference>
<dbReference type="Reactome" id="R-MMU-5654228">
    <property type="pathway name" value="Phospholipase C-mediated cascade, FGFR4"/>
</dbReference>
<dbReference type="Reactome" id="R-MMU-5654687">
    <property type="pathway name" value="Downstream signaling of activated FGFR1"/>
</dbReference>
<dbReference type="Reactome" id="R-MMU-5654688">
    <property type="pathway name" value="SHC-mediated cascade:FGFR1"/>
</dbReference>
<dbReference type="Reactome" id="R-MMU-5654689">
    <property type="pathway name" value="PI-3K cascade:FGFR1"/>
</dbReference>
<dbReference type="Reactome" id="R-MMU-5654693">
    <property type="pathway name" value="FRS-mediated FGFR1 signaling"/>
</dbReference>
<dbReference type="Reactome" id="R-MMU-5654695">
    <property type="pathway name" value="PI-3K cascade:FGFR2"/>
</dbReference>
<dbReference type="Reactome" id="R-MMU-5654699">
    <property type="pathway name" value="SHC-mediated cascade:FGFR2"/>
</dbReference>
<dbReference type="Reactome" id="R-MMU-5654700">
    <property type="pathway name" value="FRS-mediated FGFR2 signaling"/>
</dbReference>
<dbReference type="Reactome" id="R-MMU-5654704">
    <property type="pathway name" value="SHC-mediated cascade:FGFR3"/>
</dbReference>
<dbReference type="Reactome" id="R-MMU-5654706">
    <property type="pathway name" value="FRS-mediated FGFR3 signaling"/>
</dbReference>
<dbReference type="Reactome" id="R-MMU-5654710">
    <property type="pathway name" value="PI-3K cascade:FGFR3"/>
</dbReference>
<dbReference type="Reactome" id="R-MMU-5654712">
    <property type="pathway name" value="FRS-mediated FGFR4 signaling"/>
</dbReference>
<dbReference type="Reactome" id="R-MMU-5654719">
    <property type="pathway name" value="SHC-mediated cascade:FGFR4"/>
</dbReference>
<dbReference type="Reactome" id="R-MMU-5654720">
    <property type="pathway name" value="PI-3K cascade:FGFR4"/>
</dbReference>
<dbReference type="Reactome" id="R-MMU-5654726">
    <property type="pathway name" value="Negative regulation of FGFR1 signaling"/>
</dbReference>
<dbReference type="Reactome" id="R-MMU-5654727">
    <property type="pathway name" value="Negative regulation of FGFR2 signaling"/>
</dbReference>
<dbReference type="Reactome" id="R-MMU-5654732">
    <property type="pathway name" value="Negative regulation of FGFR3 signaling"/>
</dbReference>
<dbReference type="Reactome" id="R-MMU-5654733">
    <property type="pathway name" value="Negative regulation of FGFR4 signaling"/>
</dbReference>
<dbReference type="Reactome" id="R-MMU-5673001">
    <property type="pathway name" value="RAF/MAP kinase cascade"/>
</dbReference>
<dbReference type="Reactome" id="R-MMU-6811558">
    <property type="pathway name" value="PI5P, PP2A and IER3 Regulate PI3K/AKT Signaling"/>
</dbReference>
<dbReference type="BioGRID-ORCS" id="14164">
    <property type="hits" value="3 hits in 77 CRISPR screens"/>
</dbReference>
<dbReference type="ChiTaRS" id="Fgf1">
    <property type="organism name" value="mouse"/>
</dbReference>
<dbReference type="PRO" id="PR:P61148"/>
<dbReference type="Proteomes" id="UP000000589">
    <property type="component" value="Chromosome 18"/>
</dbReference>
<dbReference type="RNAct" id="P61148">
    <property type="molecule type" value="protein"/>
</dbReference>
<dbReference type="Bgee" id="ENSMUSG00000036585">
    <property type="expression patterns" value="Expressed in cerebellar nuclear complex and 244 other cell types or tissues"/>
</dbReference>
<dbReference type="ExpressionAtlas" id="P61148">
    <property type="expression patterns" value="baseline and differential"/>
</dbReference>
<dbReference type="GO" id="GO:0005938">
    <property type="term" value="C:cell cortex"/>
    <property type="evidence" value="ECO:0007669"/>
    <property type="project" value="UniProtKB-SubCell"/>
</dbReference>
<dbReference type="GO" id="GO:0005829">
    <property type="term" value="C:cytosol"/>
    <property type="evidence" value="ECO:0000250"/>
    <property type="project" value="UniProtKB"/>
</dbReference>
<dbReference type="GO" id="GO:0031012">
    <property type="term" value="C:extracellular matrix"/>
    <property type="evidence" value="ECO:0000314"/>
    <property type="project" value="MGI"/>
</dbReference>
<dbReference type="GO" id="GO:0005576">
    <property type="term" value="C:extracellular region"/>
    <property type="evidence" value="ECO:0000314"/>
    <property type="project" value="MGI"/>
</dbReference>
<dbReference type="GO" id="GO:0005615">
    <property type="term" value="C:extracellular space"/>
    <property type="evidence" value="ECO:0000314"/>
    <property type="project" value="MGI"/>
</dbReference>
<dbReference type="GO" id="GO:0005654">
    <property type="term" value="C:nucleoplasm"/>
    <property type="evidence" value="ECO:0007669"/>
    <property type="project" value="Ensembl"/>
</dbReference>
<dbReference type="GO" id="GO:0005104">
    <property type="term" value="F:fibroblast growth factor receptor binding"/>
    <property type="evidence" value="ECO:0000250"/>
    <property type="project" value="UniProtKB"/>
</dbReference>
<dbReference type="GO" id="GO:0008083">
    <property type="term" value="F:growth factor activity"/>
    <property type="evidence" value="ECO:0000250"/>
    <property type="project" value="UniProtKB"/>
</dbReference>
<dbReference type="GO" id="GO:0008201">
    <property type="term" value="F:heparin binding"/>
    <property type="evidence" value="ECO:0000250"/>
    <property type="project" value="UniProtKB"/>
</dbReference>
<dbReference type="GO" id="GO:0005178">
    <property type="term" value="F:integrin binding"/>
    <property type="evidence" value="ECO:0000250"/>
    <property type="project" value="UniProtKB"/>
</dbReference>
<dbReference type="GO" id="GO:0044548">
    <property type="term" value="F:S100 protein binding"/>
    <property type="evidence" value="ECO:0000250"/>
    <property type="project" value="UniProtKB"/>
</dbReference>
<dbReference type="GO" id="GO:0032148">
    <property type="term" value="P:activation of protein kinase B activity"/>
    <property type="evidence" value="ECO:0000250"/>
    <property type="project" value="UniProtKB"/>
</dbReference>
<dbReference type="GO" id="GO:0001525">
    <property type="term" value="P:angiogenesis"/>
    <property type="evidence" value="ECO:0007669"/>
    <property type="project" value="UniProtKB-KW"/>
</dbReference>
<dbReference type="GO" id="GO:0060681">
    <property type="term" value="P:branch elongation involved in ureteric bud branching"/>
    <property type="evidence" value="ECO:0000250"/>
    <property type="project" value="UniProtKB"/>
</dbReference>
<dbReference type="GO" id="GO:0060038">
    <property type="term" value="P:cardiac muscle cell proliferation"/>
    <property type="evidence" value="ECO:0000304"/>
    <property type="project" value="DFLAT"/>
</dbReference>
<dbReference type="GO" id="GO:0034605">
    <property type="term" value="P:cellular response to heat"/>
    <property type="evidence" value="ECO:0000250"/>
    <property type="project" value="UniProtKB"/>
</dbReference>
<dbReference type="GO" id="GO:0050673">
    <property type="term" value="P:epithelial cell proliferation"/>
    <property type="evidence" value="ECO:0000314"/>
    <property type="project" value="MGI"/>
</dbReference>
<dbReference type="GO" id="GO:0008543">
    <property type="term" value="P:fibroblast growth factor receptor signaling pathway"/>
    <property type="evidence" value="ECO:0000250"/>
    <property type="project" value="UniProtKB"/>
</dbReference>
<dbReference type="GO" id="GO:0030324">
    <property type="term" value="P:lung development"/>
    <property type="evidence" value="ECO:0000314"/>
    <property type="project" value="MGI"/>
</dbReference>
<dbReference type="GO" id="GO:0072163">
    <property type="term" value="P:mesonephric epithelium development"/>
    <property type="evidence" value="ECO:0000250"/>
    <property type="project" value="UniProtKB"/>
</dbReference>
<dbReference type="GO" id="GO:0001759">
    <property type="term" value="P:organ induction"/>
    <property type="evidence" value="ECO:0000314"/>
    <property type="project" value="MGI"/>
</dbReference>
<dbReference type="GO" id="GO:0045766">
    <property type="term" value="P:positive regulation of angiogenesis"/>
    <property type="evidence" value="ECO:0000250"/>
    <property type="project" value="UniProtKB"/>
</dbReference>
<dbReference type="GO" id="GO:0051781">
    <property type="term" value="P:positive regulation of cell division"/>
    <property type="evidence" value="ECO:0000250"/>
    <property type="project" value="UniProtKB"/>
</dbReference>
<dbReference type="GO" id="GO:0030335">
    <property type="term" value="P:positive regulation of cell migration"/>
    <property type="evidence" value="ECO:0000250"/>
    <property type="project" value="UniProtKB"/>
</dbReference>
<dbReference type="GO" id="GO:0008284">
    <property type="term" value="P:positive regulation of cell population proliferation"/>
    <property type="evidence" value="ECO:0000250"/>
    <property type="project" value="UniProtKB"/>
</dbReference>
<dbReference type="GO" id="GO:0045542">
    <property type="term" value="P:positive regulation of cholesterol biosynthetic process"/>
    <property type="evidence" value="ECO:0000250"/>
    <property type="project" value="UniProtKB"/>
</dbReference>
<dbReference type="GO" id="GO:0045893">
    <property type="term" value="P:positive regulation of DNA-templated transcription"/>
    <property type="evidence" value="ECO:0000304"/>
    <property type="project" value="DFLAT"/>
</dbReference>
<dbReference type="GO" id="GO:0010595">
    <property type="term" value="P:positive regulation of endothelial cell migration"/>
    <property type="evidence" value="ECO:0000250"/>
    <property type="project" value="UniProtKB"/>
</dbReference>
<dbReference type="GO" id="GO:0050679">
    <property type="term" value="P:positive regulation of epithelial cell proliferation"/>
    <property type="evidence" value="ECO:0000314"/>
    <property type="project" value="MGI"/>
</dbReference>
<dbReference type="GO" id="GO:0070374">
    <property type="term" value="P:positive regulation of ERK1 and ERK2 cascade"/>
    <property type="evidence" value="ECO:0000250"/>
    <property type="project" value="UniProtKB"/>
</dbReference>
<dbReference type="GO" id="GO:1902533">
    <property type="term" value="P:positive regulation of intracellular signal transduction"/>
    <property type="evidence" value="ECO:0000250"/>
    <property type="project" value="UniProtKB"/>
</dbReference>
<dbReference type="GO" id="GO:1903672">
    <property type="term" value="P:positive regulation of sprouting angiogenesis"/>
    <property type="evidence" value="ECO:0000250"/>
    <property type="project" value="UniProtKB"/>
</dbReference>
<dbReference type="GO" id="GO:0045944">
    <property type="term" value="P:positive regulation of transcription by RNA polymerase II"/>
    <property type="evidence" value="ECO:0000316"/>
    <property type="project" value="MGI"/>
</dbReference>
<dbReference type="GO" id="GO:2000544">
    <property type="term" value="P:regulation of endothelial cell chemotaxis to fibroblast growth factor"/>
    <property type="evidence" value="ECO:0007669"/>
    <property type="project" value="Ensembl"/>
</dbReference>
<dbReference type="GO" id="GO:1901509">
    <property type="term" value="P:regulation of endothelial tube morphogenesis"/>
    <property type="evidence" value="ECO:0000250"/>
    <property type="project" value="UniProtKB"/>
</dbReference>
<dbReference type="GO" id="GO:0060979">
    <property type="term" value="P:vasculogenesis involved in coronary vascular morphogenesis"/>
    <property type="evidence" value="ECO:0000304"/>
    <property type="project" value="DFLAT"/>
</dbReference>
<dbReference type="GO" id="GO:0042060">
    <property type="term" value="P:wound healing"/>
    <property type="evidence" value="ECO:0007669"/>
    <property type="project" value="Ensembl"/>
</dbReference>
<dbReference type="CDD" id="cd23313">
    <property type="entry name" value="beta-trefoil_FGF1"/>
    <property type="match status" value="1"/>
</dbReference>
<dbReference type="FunFam" id="2.80.10.50:FF:000020">
    <property type="entry name" value="Fibroblast growth factor 1"/>
    <property type="match status" value="1"/>
</dbReference>
<dbReference type="Gene3D" id="2.80.10.50">
    <property type="match status" value="1"/>
</dbReference>
<dbReference type="InterPro" id="IPR002209">
    <property type="entry name" value="Fibroblast_GF_fam"/>
</dbReference>
<dbReference type="InterPro" id="IPR008996">
    <property type="entry name" value="IL1/FGF"/>
</dbReference>
<dbReference type="PANTHER" id="PTHR11486">
    <property type="entry name" value="FIBROBLAST GROWTH FACTOR"/>
    <property type="match status" value="1"/>
</dbReference>
<dbReference type="Pfam" id="PF00167">
    <property type="entry name" value="FGF"/>
    <property type="match status" value="1"/>
</dbReference>
<dbReference type="PRINTS" id="PR00263">
    <property type="entry name" value="HBGFFGF"/>
</dbReference>
<dbReference type="PRINTS" id="PR00262">
    <property type="entry name" value="IL1HBGF"/>
</dbReference>
<dbReference type="SMART" id="SM00442">
    <property type="entry name" value="FGF"/>
    <property type="match status" value="1"/>
</dbReference>
<dbReference type="SUPFAM" id="SSF50353">
    <property type="entry name" value="Cytokine"/>
    <property type="match status" value="1"/>
</dbReference>
<dbReference type="PROSITE" id="PS00247">
    <property type="entry name" value="HBGF_FGF"/>
    <property type="match status" value="1"/>
</dbReference>
<feature type="initiator methionine" description="Removed" evidence="2">
    <location>
        <position position="1"/>
    </location>
</feature>
<feature type="propeptide" id="PRO_0000008911" evidence="1">
    <location>
        <begin position="2"/>
        <end position="15"/>
    </location>
</feature>
<feature type="chain" id="PRO_0000008912" description="Fibroblast growth factor 1">
    <location>
        <begin position="16"/>
        <end position="155"/>
    </location>
</feature>
<feature type="region of interest" description="Heparin-binding" evidence="1">
    <location>
        <begin position="127"/>
        <end position="143"/>
    </location>
</feature>
<feature type="binding site" evidence="1">
    <location>
        <position position="33"/>
    </location>
    <ligand>
        <name>heparin</name>
        <dbReference type="ChEBI" id="CHEBI:28304"/>
    </ligand>
</feature>
<feature type="modified residue" description="N-acetylalanine" evidence="2">
    <location>
        <position position="2"/>
    </location>
</feature>
<proteinExistence type="evidence at protein level"/>
<accession>P61148</accession>
<accession>P10935</accession>
<reference key="1">
    <citation type="journal article" date="1990" name="Dev. Biol.">
        <title>Isolation of cDNAs encoding four mouse FGF family members and characterization of their expression patterns during embryogenesis.</title>
        <authorList>
            <person name="Hebert J.M."/>
            <person name="Basilico C."/>
            <person name="Goldfarb M."/>
            <person name="Haub O."/>
            <person name="Martin G.R."/>
        </authorList>
    </citation>
    <scope>NUCLEOTIDE SEQUENCE [MRNA]</scope>
</reference>
<reference key="2">
    <citation type="journal article" date="1996" name="Gene">
        <title>Cloning and characterization of the mouse Fgf-1 gene.</title>
        <authorList>
            <person name="Madiai F."/>
            <person name="Hackshaw K.V."/>
            <person name="Chiu I.M."/>
        </authorList>
    </citation>
    <scope>NUCLEOTIDE SEQUENCE [GENOMIC DNA]</scope>
</reference>
<reference key="3">
    <citation type="journal article" date="1996" name="J. Biol. Chem.">
        <title>Characterization of the 1B promoter of fibroblast growth factor 1 and its expression in the adult and developing mouse brain.</title>
        <authorList>
            <person name="Alam K.Y."/>
            <person name="Frostholm A."/>
            <person name="Hackshaw K.V."/>
            <person name="Evans J.E."/>
            <person name="Rotter A."/>
            <person name="Chiu I.M."/>
        </authorList>
    </citation>
    <scope>NUCLEOTIDE SEQUENCE [MRNA]</scope>
    <source>
        <strain>BALB/cJ</strain>
    </source>
</reference>
<reference key="4">
    <citation type="journal article" date="2004" name="Genome Res.">
        <title>The status, quality, and expansion of the NIH full-length cDNA project: the Mammalian Gene Collection (MGC).</title>
        <authorList>
            <consortium name="The MGC Project Team"/>
        </authorList>
    </citation>
    <scope>NUCLEOTIDE SEQUENCE [LARGE SCALE MRNA]</scope>
    <source>
        <strain>FVB/N</strain>
        <tissue>Liver</tissue>
    </source>
</reference>
<reference key="5">
    <citation type="journal article" date="2010" name="Cell">
        <title>A tissue-specific atlas of mouse protein phosphorylation and expression.</title>
        <authorList>
            <person name="Huttlin E.L."/>
            <person name="Jedrychowski M.P."/>
            <person name="Elias J.E."/>
            <person name="Goswami T."/>
            <person name="Rad R."/>
            <person name="Beausoleil S.A."/>
            <person name="Villen J."/>
            <person name="Haas W."/>
            <person name="Sowa M.E."/>
            <person name="Gygi S.P."/>
        </authorList>
    </citation>
    <scope>IDENTIFICATION BY MASS SPECTROMETRY [LARGE SCALE ANALYSIS]</scope>
    <source>
        <tissue>Brain</tissue>
        <tissue>Heart</tissue>
        <tissue>Kidney</tissue>
        <tissue>Liver</tissue>
        <tissue>Lung</tissue>
    </source>
</reference>
<comment type="function">
    <text evidence="3">Plays an important role in the regulation of cell survival, cell division, angiogenesis, cell differentiation and cell migration. Functions as a potent mitogen in vitro. Acts as a ligand for FGFR1 and integrins. Binds to FGFR1 in the presence of heparin leading to FGFR1 dimerization and activation via sequential autophosphorylation on tyrosine residues which act as docking sites for interacting proteins, leading to the activation of several signaling cascades. Binds to integrin ITGAV:ITGB3. Its binding to integrin, subsequent ternary complex formation with integrin and FGFR1, and the recruitment of PTPN11 to the complex are essential for FGF1 signaling. Induces the phosphorylation and activation of FGFR1, FRS2, MAPK3/ERK1, MAPK1/ERK2 and AKT1. Can induce angiogenesis.</text>
</comment>
<comment type="subunit">
    <text evidence="3">Monomer. Homodimer. Interacts with FGFR1, FGFR2, FGFR3 and FGFR4. Affinity between fibroblast growth factors (FGFs) and their receptors is increased by heparan sulfate glycosaminoglycans that function as coreceptors. Found in a complex with FGFBP1, FGF1 and FGF2. Interacts with FGFBP1. Part of a Cu(2+)-dependent multiprotein aggregate containing FGF1, S100A13 and SYT1. Interacts with SYT1. Interacts with S100A13 (By similarity). Interacts with LRRC59 (By similarity). Interacts with CSNKA, CSNKB and FIBP (By similarity). While binding with LRRC59, CSNKA and FIBP seem mutually exclusive, CSNKB and FIBP may cooperatively interact with FGF1. Forms a ternary complex with FGFR1 and ITGAV:ITGB3 and induces the recruitment of PTPN11 to the complex (By similarity).</text>
</comment>
<comment type="subcellular location">
    <subcellularLocation>
        <location>Secreted</location>
    </subcellularLocation>
    <subcellularLocation>
        <location evidence="1">Cytoplasm</location>
    </subcellularLocation>
    <subcellularLocation>
        <location evidence="1">Cytoplasm</location>
        <location evidence="1">Cell cortex</location>
    </subcellularLocation>
    <subcellularLocation>
        <location evidence="1">Cytoplasm</location>
        <location evidence="1">Cytosol</location>
    </subcellularLocation>
    <subcellularLocation>
        <location evidence="1">Nucleus</location>
    </subcellularLocation>
    <text evidence="1">Lacks a cleavable signal sequence. Within the cytoplasm, it is transported to the cell membrane and then secreted by a non-classical pathway that requires Cu(2+) ions and S100A13. Secreted in a complex with SYT1. Binding of exogenous FGF1 to FGFR facilitates endocytosis followed by translocation of FGF1 across endosomal membrane into the cytosol. Nuclear import from the cytosol requires the classical nuclear import machinery, involving proteins KPNA1 and KPNB1, as well as LRRC59 (By similarity).</text>
</comment>
<comment type="PTM">
    <text evidence="1">In the nucleus, phosphorylated by PKC/PRKCD.</text>
</comment>
<comment type="similarity">
    <text evidence="4">Belongs to the heparin-binding growth factors family.</text>
</comment>
<name>FGF1_MOUSE</name>
<organism>
    <name type="scientific">Mus musculus</name>
    <name type="common">Mouse</name>
    <dbReference type="NCBI Taxonomy" id="10090"/>
    <lineage>
        <taxon>Eukaryota</taxon>
        <taxon>Metazoa</taxon>
        <taxon>Chordata</taxon>
        <taxon>Craniata</taxon>
        <taxon>Vertebrata</taxon>
        <taxon>Euteleostomi</taxon>
        <taxon>Mammalia</taxon>
        <taxon>Eutheria</taxon>
        <taxon>Euarchontoglires</taxon>
        <taxon>Glires</taxon>
        <taxon>Rodentia</taxon>
        <taxon>Myomorpha</taxon>
        <taxon>Muroidea</taxon>
        <taxon>Muridae</taxon>
        <taxon>Murinae</taxon>
        <taxon>Mus</taxon>
        <taxon>Mus</taxon>
    </lineage>
</organism>
<keyword id="KW-0007">Acetylation</keyword>
<keyword id="KW-0037">Angiogenesis</keyword>
<keyword id="KW-0963">Cytoplasm</keyword>
<keyword id="KW-0217">Developmental protein</keyword>
<keyword id="KW-0221">Differentiation</keyword>
<keyword id="KW-0339">Growth factor</keyword>
<keyword id="KW-0358">Heparin-binding</keyword>
<keyword id="KW-0497">Mitogen</keyword>
<keyword id="KW-0539">Nucleus</keyword>
<keyword id="KW-0597">Phosphoprotein</keyword>
<keyword id="KW-1185">Reference proteome</keyword>
<keyword id="KW-0964">Secreted</keyword>
<sequence length="155" mass="17418">MAEGEITTFAALTERFNLPLGNYKKPKLLYCSNGGHFLRILPDGTVDGTRDRSDQHIQLQLSAESAGEVYIKGTETGQYLAMDTEGLLYGSQTPNEECLFLERLEENHYNTYTSKKHAEKNWFVGLKKNGSCKRGPRTHYGQKAILFLPLPVSSD</sequence>
<protein>
    <recommendedName>
        <fullName>Fibroblast growth factor 1</fullName>
        <shortName>FGF-1</shortName>
    </recommendedName>
    <alternativeName>
        <fullName>Acidic fibroblast growth factor</fullName>
        <shortName>aFGF</shortName>
    </alternativeName>
    <alternativeName>
        <fullName>Heparin-binding growth factor 1</fullName>
        <shortName>HBGF-1</shortName>
    </alternativeName>
</protein>
<gene>
    <name type="primary">Fgf1</name>
    <name type="synonym">Fgf-1</name>
    <name type="synonym">Fgfa</name>
</gene>
<evidence type="ECO:0000250" key="1"/>
<evidence type="ECO:0000250" key="2">
    <source>
        <dbReference type="UniProtKB" id="P03968"/>
    </source>
</evidence>
<evidence type="ECO:0000250" key="3">
    <source>
        <dbReference type="UniProtKB" id="P05230"/>
    </source>
</evidence>
<evidence type="ECO:0000305" key="4"/>